<proteinExistence type="evidence at transcript level"/>
<evidence type="ECO:0000250" key="1">
    <source>
        <dbReference type="UniProtKB" id="A0A0D4WTV1"/>
    </source>
</evidence>
<evidence type="ECO:0000250" key="2">
    <source>
        <dbReference type="UniProtKB" id="A0A0D4WV12"/>
    </source>
</evidence>
<evidence type="ECO:0000250" key="3">
    <source>
        <dbReference type="UniProtKB" id="P0CE80"/>
    </source>
</evidence>
<evidence type="ECO:0000250" key="4">
    <source>
        <dbReference type="UniProtKB" id="Q4ZFU2"/>
    </source>
</evidence>
<evidence type="ECO:0000250" key="5">
    <source>
        <dbReference type="UniProtKB" id="Q8I914"/>
    </source>
</evidence>
<evidence type="ECO:0000303" key="6">
    <source>
    </source>
</evidence>
<evidence type="ECO:0000305" key="7"/>
<evidence type="ECO:0000305" key="8">
    <source>
    </source>
</evidence>
<accession>C0JAR9</accession>
<name>A1IB1_LOXHI</name>
<sequence length="273" mass="30472">WIMGYMVNAIYQIDEFVNLGANSIETDVSFDDNANPEYTYHGIPCDCGRSCLKWENYNDFLKGLRSATTPGNSKYQSKLILVVFDLKTGSLYDNQASEAGKKLAKNLLKHYWNNGNNGGRAYIVLSIPDLNHYPLIKGFTDTLKQEGHPELLEKVGYDFSGNDAIGDVAKAYKKAGVSGHVWQSDGITNCLLRGLSRVKDAVANRDSGKGYINKVYYWTVDKRATTRDALDAGVDGVMTNYPDVIADVMNEAAYKNKVRLATYEDSPWVTFKK</sequence>
<dbReference type="EC" id="4.6.1.-" evidence="4"/>
<dbReference type="EMBL" id="FJ171354">
    <property type="protein sequence ID" value="ACN48850.1"/>
    <property type="molecule type" value="mRNA"/>
</dbReference>
<dbReference type="SMR" id="C0JAR9"/>
<dbReference type="GO" id="GO:0005576">
    <property type="term" value="C:extracellular region"/>
    <property type="evidence" value="ECO:0007669"/>
    <property type="project" value="UniProtKB-SubCell"/>
</dbReference>
<dbReference type="GO" id="GO:0016829">
    <property type="term" value="F:lyase activity"/>
    <property type="evidence" value="ECO:0007669"/>
    <property type="project" value="UniProtKB-KW"/>
</dbReference>
<dbReference type="GO" id="GO:0046872">
    <property type="term" value="F:metal ion binding"/>
    <property type="evidence" value="ECO:0007669"/>
    <property type="project" value="UniProtKB-KW"/>
</dbReference>
<dbReference type="GO" id="GO:0008081">
    <property type="term" value="F:phosphoric diester hydrolase activity"/>
    <property type="evidence" value="ECO:0007669"/>
    <property type="project" value="InterPro"/>
</dbReference>
<dbReference type="GO" id="GO:0090729">
    <property type="term" value="F:toxin activity"/>
    <property type="evidence" value="ECO:0007669"/>
    <property type="project" value="UniProtKB-KW"/>
</dbReference>
<dbReference type="GO" id="GO:0031640">
    <property type="term" value="P:killing of cells of another organism"/>
    <property type="evidence" value="ECO:0007669"/>
    <property type="project" value="UniProtKB-KW"/>
</dbReference>
<dbReference type="GO" id="GO:0016042">
    <property type="term" value="P:lipid catabolic process"/>
    <property type="evidence" value="ECO:0007669"/>
    <property type="project" value="UniProtKB-KW"/>
</dbReference>
<dbReference type="CDD" id="cd08576">
    <property type="entry name" value="GDPD_like_SMaseD_PLD"/>
    <property type="match status" value="1"/>
</dbReference>
<dbReference type="Gene3D" id="3.20.20.190">
    <property type="entry name" value="Phosphatidylinositol (PI) phosphodiesterase"/>
    <property type="match status" value="1"/>
</dbReference>
<dbReference type="InterPro" id="IPR017946">
    <property type="entry name" value="PLC-like_Pdiesterase_TIM-brl"/>
</dbReference>
<dbReference type="Pfam" id="PF13653">
    <property type="entry name" value="GDPD_2"/>
    <property type="match status" value="1"/>
</dbReference>
<dbReference type="SUPFAM" id="SSF51695">
    <property type="entry name" value="PLC-like phosphodiesterases"/>
    <property type="match status" value="1"/>
</dbReference>
<protein>
    <recommendedName>
        <fullName evidence="6">Dermonecrotic toxin LhSicTox-alphaIA2bi</fullName>
        <ecNumber evidence="4">4.6.1.-</ecNumber>
    </recommendedName>
    <alternativeName>
        <fullName>Phospholipase D</fullName>
        <shortName>PLD</shortName>
    </alternativeName>
    <alternativeName>
        <fullName>Sphingomyelin phosphodiesterase D</fullName>
        <shortName>SMD</shortName>
        <shortName>SMase D</shortName>
        <shortName>Sphingomyelinase D</shortName>
    </alternativeName>
</protein>
<comment type="function">
    <text evidence="1 3">Dermonecrotic toxins cleave the phosphodiester linkage between the phosphate and headgroup of certain phospholipids (sphingolipid and lysolipid substrates), forming an alcohol (often choline) and a cyclic phosphate (By similarity). This toxin acts on sphingomyelin (SM) (By similarity). It may also act on ceramide phosphoethanolamine (CPE), lysophosphatidylcholine (LPC) and lysophosphatidylethanolamine (LPE), but not on lysophosphatidylserine (LPS), and lysophosphatidylglycerol (LPG) (By similarity). It acts by transphosphatidylation, releasing exclusively cyclic phosphate products as second products (By similarity). Induces dermonecrosis, hemolysis, increased vascular permeability, edema, inflammatory response, and platelet aggregation (By similarity).</text>
</comment>
<comment type="catalytic activity">
    <reaction evidence="1">
        <text>an N-(acyl)-sphingosylphosphocholine = an N-(acyl)-sphingosyl-1,3-cyclic phosphate + choline</text>
        <dbReference type="Rhea" id="RHEA:60652"/>
        <dbReference type="ChEBI" id="CHEBI:15354"/>
        <dbReference type="ChEBI" id="CHEBI:64583"/>
        <dbReference type="ChEBI" id="CHEBI:143892"/>
    </reaction>
</comment>
<comment type="catalytic activity">
    <reaction evidence="1">
        <text>an N-(acyl)-sphingosylphosphoethanolamine = an N-(acyl)-sphingosyl-1,3-cyclic phosphate + ethanolamine</text>
        <dbReference type="Rhea" id="RHEA:60648"/>
        <dbReference type="ChEBI" id="CHEBI:57603"/>
        <dbReference type="ChEBI" id="CHEBI:143891"/>
        <dbReference type="ChEBI" id="CHEBI:143892"/>
    </reaction>
</comment>
<comment type="catalytic activity">
    <reaction evidence="1">
        <text>a 1-acyl-sn-glycero-3-phosphocholine = a 1-acyl-sn-glycero-2,3-cyclic phosphate + choline</text>
        <dbReference type="Rhea" id="RHEA:60700"/>
        <dbReference type="ChEBI" id="CHEBI:15354"/>
        <dbReference type="ChEBI" id="CHEBI:58168"/>
        <dbReference type="ChEBI" id="CHEBI:143947"/>
    </reaction>
</comment>
<comment type="catalytic activity">
    <reaction evidence="1">
        <text>a 1-acyl-sn-glycero-3-phosphoethanolamine = a 1-acyl-sn-glycero-2,3-cyclic phosphate + ethanolamine</text>
        <dbReference type="Rhea" id="RHEA:60704"/>
        <dbReference type="ChEBI" id="CHEBI:57603"/>
        <dbReference type="ChEBI" id="CHEBI:64381"/>
        <dbReference type="ChEBI" id="CHEBI:143947"/>
    </reaction>
</comment>
<comment type="cofactor">
    <cofactor evidence="5">
        <name>Mg(2+)</name>
        <dbReference type="ChEBI" id="CHEBI:18420"/>
    </cofactor>
    <text evidence="5">Binds 1 Mg(2+) ion per subunit.</text>
</comment>
<comment type="subcellular location">
    <subcellularLocation>
        <location evidence="8">Secreted</location>
    </subcellularLocation>
</comment>
<comment type="tissue specificity">
    <text evidence="8">Expressed by the venom gland.</text>
</comment>
<comment type="similarity">
    <text evidence="7">Belongs to the arthropod phospholipase D family. Class II subfamily.</text>
</comment>
<comment type="caution">
    <text evidence="1 2 4">The most common activity assay for dermonecrotic toxins detects enzymatic activity by monitoring choline release from substrate. Liberation of choline from sphingomyelin (SM) or lysophosphatidylcholine (LPC) is commonly assumed to result from substrate hydrolysis, giving either ceramide-1-phosphate (C1P) or lysophosphatidic acid (LPA), respectively, as a second product. However, two studies from Lajoie and colleagues (2013 and 2015) report the observation of exclusive formation of cyclic phosphate products as second products, resulting from intramolecular transphosphatidylation. Cyclic phosphates have vastly different biological properties from their monoester counterparts, and they may be relevant to the pathology of brown spider envenomation.</text>
</comment>
<reference key="1">
    <citation type="journal article" date="2009" name="Mol. Biol. Evol.">
        <title>Molecular evolution, functional variation, and proposed nomenclature of the gene family that includes sphingomyelinase D in sicariid spider venoms.</title>
        <authorList>
            <person name="Binford G.J."/>
            <person name="Bodner M.R."/>
            <person name="Cordes M.H."/>
            <person name="Baldwin K.L."/>
            <person name="Rynerson M.R."/>
            <person name="Burns S.N."/>
            <person name="Zobel-Thropp P.A."/>
        </authorList>
    </citation>
    <scope>NUCLEOTIDE SEQUENCE [MRNA]</scope>
    <scope>NOMENCLATURE</scope>
    <source>
        <tissue>Venom gland</tissue>
    </source>
</reference>
<keyword id="KW-0204">Cytolysis</keyword>
<keyword id="KW-1061">Dermonecrotic toxin</keyword>
<keyword id="KW-1015">Disulfide bond</keyword>
<keyword id="KW-0354">Hemolysis</keyword>
<keyword id="KW-0442">Lipid degradation</keyword>
<keyword id="KW-0443">Lipid metabolism</keyword>
<keyword id="KW-0456">Lyase</keyword>
<keyword id="KW-0460">Magnesium</keyword>
<keyword id="KW-0479">Metal-binding</keyword>
<keyword id="KW-0964">Secreted</keyword>
<keyword id="KW-0800">Toxin</keyword>
<organism>
    <name type="scientific">Loxosceles hirsuta</name>
    <name type="common">Recluse spider</name>
    <dbReference type="NCBI Taxonomy" id="571525"/>
    <lineage>
        <taxon>Eukaryota</taxon>
        <taxon>Metazoa</taxon>
        <taxon>Ecdysozoa</taxon>
        <taxon>Arthropoda</taxon>
        <taxon>Chelicerata</taxon>
        <taxon>Arachnida</taxon>
        <taxon>Araneae</taxon>
        <taxon>Araneomorphae</taxon>
        <taxon>Haplogynae</taxon>
        <taxon>Scytodoidea</taxon>
        <taxon>Sicariidae</taxon>
        <taxon>Loxosceles</taxon>
    </lineage>
</organism>
<feature type="chain" id="PRO_0000392757" description="Dermonecrotic toxin LhSicTox-alphaIA2bi">
    <location>
        <begin position="1" status="less than"/>
        <end position="273"/>
    </location>
</feature>
<feature type="active site" description="Nucleophile" evidence="5">
    <location>
        <position position="41"/>
    </location>
</feature>
<feature type="binding site" evidence="5">
    <location>
        <position position="25"/>
    </location>
    <ligand>
        <name>Mg(2+)</name>
        <dbReference type="ChEBI" id="CHEBI:18420"/>
    </ligand>
</feature>
<feature type="binding site" evidence="5">
    <location>
        <position position="27"/>
    </location>
    <ligand>
        <name>Mg(2+)</name>
        <dbReference type="ChEBI" id="CHEBI:18420"/>
    </ligand>
</feature>
<feature type="binding site" evidence="5">
    <location>
        <position position="85"/>
    </location>
    <ligand>
        <name>Mg(2+)</name>
        <dbReference type="ChEBI" id="CHEBI:18420"/>
    </ligand>
</feature>
<feature type="disulfide bond" evidence="3">
    <location>
        <begin position="45"/>
        <end position="51"/>
    </location>
</feature>
<feature type="disulfide bond" evidence="3">
    <location>
        <begin position="47"/>
        <end position="190"/>
    </location>
</feature>
<feature type="non-terminal residue">
    <location>
        <position position="1"/>
    </location>
</feature>